<name>AROB_SULTO</name>
<protein>
    <recommendedName>
        <fullName evidence="1">3-dehydroquinate synthase</fullName>
        <shortName evidence="1">DHQS</shortName>
        <ecNumber evidence="1">4.2.3.4</ecNumber>
    </recommendedName>
</protein>
<accession>Q96Y96</accession>
<reference key="1">
    <citation type="journal article" date="2001" name="DNA Res.">
        <title>Complete genome sequence of an aerobic thermoacidophilic Crenarchaeon, Sulfolobus tokodaii strain7.</title>
        <authorList>
            <person name="Kawarabayasi Y."/>
            <person name="Hino Y."/>
            <person name="Horikawa H."/>
            <person name="Jin-no K."/>
            <person name="Takahashi M."/>
            <person name="Sekine M."/>
            <person name="Baba S."/>
            <person name="Ankai A."/>
            <person name="Kosugi H."/>
            <person name="Hosoyama A."/>
            <person name="Fukui S."/>
            <person name="Nagai Y."/>
            <person name="Nishijima K."/>
            <person name="Otsuka R."/>
            <person name="Nakazawa H."/>
            <person name="Takamiya M."/>
            <person name="Kato Y."/>
            <person name="Yoshizawa T."/>
            <person name="Tanaka T."/>
            <person name="Kudoh Y."/>
            <person name="Yamazaki J."/>
            <person name="Kushida N."/>
            <person name="Oguchi A."/>
            <person name="Aoki K."/>
            <person name="Masuda S."/>
            <person name="Yanagii M."/>
            <person name="Nishimura M."/>
            <person name="Yamagishi A."/>
            <person name="Oshima T."/>
            <person name="Kikuchi H."/>
        </authorList>
    </citation>
    <scope>NUCLEOTIDE SEQUENCE [LARGE SCALE GENOMIC DNA]</scope>
    <source>
        <strain>DSM 16993 / JCM 10545 / NBRC 100140 / 7</strain>
    </source>
</reference>
<comment type="function">
    <text evidence="1">Catalyzes the conversion of 3-deoxy-D-arabino-heptulosonate 7-phosphate (DAHP) to dehydroquinate (DHQ).</text>
</comment>
<comment type="catalytic activity">
    <reaction evidence="1">
        <text>7-phospho-2-dehydro-3-deoxy-D-arabino-heptonate = 3-dehydroquinate + phosphate</text>
        <dbReference type="Rhea" id="RHEA:21968"/>
        <dbReference type="ChEBI" id="CHEBI:32364"/>
        <dbReference type="ChEBI" id="CHEBI:43474"/>
        <dbReference type="ChEBI" id="CHEBI:58394"/>
        <dbReference type="EC" id="4.2.3.4"/>
    </reaction>
</comment>
<comment type="cofactor">
    <cofactor evidence="1">
        <name>NAD(+)</name>
        <dbReference type="ChEBI" id="CHEBI:57540"/>
    </cofactor>
</comment>
<comment type="cofactor">
    <cofactor evidence="1">
        <name>Co(2+)</name>
        <dbReference type="ChEBI" id="CHEBI:48828"/>
    </cofactor>
    <cofactor evidence="1">
        <name>Zn(2+)</name>
        <dbReference type="ChEBI" id="CHEBI:29105"/>
    </cofactor>
    <text evidence="1">Binds 1 divalent metal cation per subunit. Can use either Co(2+) or Zn(2+).</text>
</comment>
<comment type="pathway">
    <text evidence="1">Metabolic intermediate biosynthesis; chorismate biosynthesis; chorismate from D-erythrose 4-phosphate and phosphoenolpyruvate: step 2/7.</text>
</comment>
<comment type="subcellular location">
    <subcellularLocation>
        <location evidence="1">Cytoplasm</location>
    </subcellularLocation>
</comment>
<comment type="similarity">
    <text evidence="1">Belongs to the sugar phosphate cyclases superfamily. Dehydroquinate synthase family.</text>
</comment>
<sequence length="352" mass="38913">MRIVNENLCNNEISIVIGKGALSALEELKDKKVALFYSQKIDPSRVKSHLKSFIEIPIIDGEGAKDIQYALKLVKLLFENGFDRGDYVIALGGGTVTDVVGFVASIYMRGINLINIPTTLLGMVDAAIGGKTGVNFENVKNVLGTFYQPTMIISDLNFLETLPLEEIKKGLAEVIKYGLVLDKDLYDYLAMNKEKIFAKDESALEEIIYKSSVDKFSVVKADERETKGIRIVLNFGHTIGHAIEAGSNFTVPHGYAISVGMVCEAKMAEEVGYAEEGVVEDVTWILSQYELPLTVDSLNAKIDVKKAIDAITKDKKVRGGYVMMPFPTRIGDWKRVDVPIETLKGFAEQCLR</sequence>
<proteinExistence type="inferred from homology"/>
<organism>
    <name type="scientific">Sulfurisphaera tokodaii (strain DSM 16993 / JCM 10545 / NBRC 100140 / 7)</name>
    <name type="common">Sulfolobus tokodaii</name>
    <dbReference type="NCBI Taxonomy" id="273063"/>
    <lineage>
        <taxon>Archaea</taxon>
        <taxon>Thermoproteota</taxon>
        <taxon>Thermoprotei</taxon>
        <taxon>Sulfolobales</taxon>
        <taxon>Sulfolobaceae</taxon>
        <taxon>Sulfurisphaera</taxon>
    </lineage>
</organism>
<evidence type="ECO:0000255" key="1">
    <source>
        <dbReference type="HAMAP-Rule" id="MF_00110"/>
    </source>
</evidence>
<feature type="chain" id="PRO_0000140823" description="3-dehydroquinate synthase">
    <location>
        <begin position="1"/>
        <end position="352"/>
    </location>
</feature>
<feature type="binding site" evidence="1">
    <location>
        <begin position="60"/>
        <end position="65"/>
    </location>
    <ligand>
        <name>NAD(+)</name>
        <dbReference type="ChEBI" id="CHEBI:57540"/>
    </ligand>
</feature>
<feature type="binding site" evidence="1">
    <location>
        <begin position="118"/>
        <end position="119"/>
    </location>
    <ligand>
        <name>NAD(+)</name>
        <dbReference type="ChEBI" id="CHEBI:57540"/>
    </ligand>
</feature>
<feature type="binding site" evidence="1">
    <location>
        <position position="131"/>
    </location>
    <ligand>
        <name>NAD(+)</name>
        <dbReference type="ChEBI" id="CHEBI:57540"/>
    </ligand>
</feature>
<feature type="binding site" evidence="1">
    <location>
        <position position="140"/>
    </location>
    <ligand>
        <name>NAD(+)</name>
        <dbReference type="ChEBI" id="CHEBI:57540"/>
    </ligand>
</feature>
<feature type="binding site" evidence="1">
    <location>
        <begin position="158"/>
        <end position="161"/>
    </location>
    <ligand>
        <name>NAD(+)</name>
        <dbReference type="ChEBI" id="CHEBI:57540"/>
    </ligand>
</feature>
<feature type="binding site" evidence="1">
    <location>
        <position position="173"/>
    </location>
    <ligand>
        <name>Zn(2+)</name>
        <dbReference type="ChEBI" id="CHEBI:29105"/>
    </ligand>
</feature>
<feature type="binding site" evidence="1">
    <location>
        <position position="237"/>
    </location>
    <ligand>
        <name>Zn(2+)</name>
        <dbReference type="ChEBI" id="CHEBI:29105"/>
    </ligand>
</feature>
<feature type="binding site" evidence="1">
    <location>
        <position position="253"/>
    </location>
    <ligand>
        <name>Zn(2+)</name>
        <dbReference type="ChEBI" id="CHEBI:29105"/>
    </ligand>
</feature>
<keyword id="KW-0028">Amino-acid biosynthesis</keyword>
<keyword id="KW-0057">Aromatic amino acid biosynthesis</keyword>
<keyword id="KW-0170">Cobalt</keyword>
<keyword id="KW-0963">Cytoplasm</keyword>
<keyword id="KW-0456">Lyase</keyword>
<keyword id="KW-0479">Metal-binding</keyword>
<keyword id="KW-0520">NAD</keyword>
<keyword id="KW-0547">Nucleotide-binding</keyword>
<keyword id="KW-1185">Reference proteome</keyword>
<keyword id="KW-0862">Zinc</keyword>
<gene>
    <name evidence="1" type="primary">aroB</name>
    <name type="ordered locus">STK_22720</name>
</gene>
<dbReference type="EC" id="4.2.3.4" evidence="1"/>
<dbReference type="EMBL" id="BA000023">
    <property type="protein sequence ID" value="BAB67381.1"/>
    <property type="molecule type" value="Genomic_DNA"/>
</dbReference>
<dbReference type="RefSeq" id="WP_010980356.1">
    <property type="nucleotide sequence ID" value="NC_003106.2"/>
</dbReference>
<dbReference type="SMR" id="Q96Y96"/>
<dbReference type="STRING" id="273063.STK_22720"/>
<dbReference type="GeneID" id="1460354"/>
<dbReference type="KEGG" id="sto:STK_22720"/>
<dbReference type="PATRIC" id="fig|273063.9.peg.2576"/>
<dbReference type="eggNOG" id="arCOG00983">
    <property type="taxonomic scope" value="Archaea"/>
</dbReference>
<dbReference type="OrthoDB" id="21407at2157"/>
<dbReference type="UniPathway" id="UPA00053">
    <property type="reaction ID" value="UER00085"/>
</dbReference>
<dbReference type="Proteomes" id="UP000001015">
    <property type="component" value="Chromosome"/>
</dbReference>
<dbReference type="GO" id="GO:0005737">
    <property type="term" value="C:cytoplasm"/>
    <property type="evidence" value="ECO:0007669"/>
    <property type="project" value="UniProtKB-SubCell"/>
</dbReference>
<dbReference type="GO" id="GO:0003856">
    <property type="term" value="F:3-dehydroquinate synthase activity"/>
    <property type="evidence" value="ECO:0007669"/>
    <property type="project" value="UniProtKB-UniRule"/>
</dbReference>
<dbReference type="GO" id="GO:0046872">
    <property type="term" value="F:metal ion binding"/>
    <property type="evidence" value="ECO:0007669"/>
    <property type="project" value="UniProtKB-KW"/>
</dbReference>
<dbReference type="GO" id="GO:0000166">
    <property type="term" value="F:nucleotide binding"/>
    <property type="evidence" value="ECO:0007669"/>
    <property type="project" value="UniProtKB-KW"/>
</dbReference>
<dbReference type="GO" id="GO:0008652">
    <property type="term" value="P:amino acid biosynthetic process"/>
    <property type="evidence" value="ECO:0007669"/>
    <property type="project" value="UniProtKB-KW"/>
</dbReference>
<dbReference type="GO" id="GO:0009073">
    <property type="term" value="P:aromatic amino acid family biosynthetic process"/>
    <property type="evidence" value="ECO:0007669"/>
    <property type="project" value="UniProtKB-KW"/>
</dbReference>
<dbReference type="GO" id="GO:0009423">
    <property type="term" value="P:chorismate biosynthetic process"/>
    <property type="evidence" value="ECO:0007669"/>
    <property type="project" value="UniProtKB-UniRule"/>
</dbReference>
<dbReference type="CDD" id="cd08195">
    <property type="entry name" value="DHQS"/>
    <property type="match status" value="1"/>
</dbReference>
<dbReference type="FunFam" id="3.40.50.1970:FF:000007">
    <property type="entry name" value="Pentafunctional AROM polypeptide"/>
    <property type="match status" value="1"/>
</dbReference>
<dbReference type="Gene3D" id="3.40.50.1970">
    <property type="match status" value="1"/>
</dbReference>
<dbReference type="Gene3D" id="1.20.1090.10">
    <property type="entry name" value="Dehydroquinate synthase-like - alpha domain"/>
    <property type="match status" value="1"/>
</dbReference>
<dbReference type="HAMAP" id="MF_00110">
    <property type="entry name" value="DHQ_synthase"/>
    <property type="match status" value="1"/>
</dbReference>
<dbReference type="InterPro" id="IPR050071">
    <property type="entry name" value="Dehydroquinate_synthase"/>
</dbReference>
<dbReference type="InterPro" id="IPR016037">
    <property type="entry name" value="DHQ_synth_AroB"/>
</dbReference>
<dbReference type="InterPro" id="IPR030963">
    <property type="entry name" value="DHQ_synth_fam"/>
</dbReference>
<dbReference type="InterPro" id="IPR030960">
    <property type="entry name" value="DHQS/DOIS_N"/>
</dbReference>
<dbReference type="InterPro" id="IPR056179">
    <property type="entry name" value="DHQS_C"/>
</dbReference>
<dbReference type="NCBIfam" id="TIGR01357">
    <property type="entry name" value="aroB"/>
    <property type="match status" value="1"/>
</dbReference>
<dbReference type="PANTHER" id="PTHR43622">
    <property type="entry name" value="3-DEHYDROQUINATE SYNTHASE"/>
    <property type="match status" value="1"/>
</dbReference>
<dbReference type="PANTHER" id="PTHR43622:SF1">
    <property type="entry name" value="3-DEHYDROQUINATE SYNTHASE"/>
    <property type="match status" value="1"/>
</dbReference>
<dbReference type="Pfam" id="PF01761">
    <property type="entry name" value="DHQ_synthase"/>
    <property type="match status" value="1"/>
</dbReference>
<dbReference type="Pfam" id="PF24621">
    <property type="entry name" value="DHQS_C"/>
    <property type="match status" value="1"/>
</dbReference>
<dbReference type="PIRSF" id="PIRSF001455">
    <property type="entry name" value="DHQ_synth"/>
    <property type="match status" value="1"/>
</dbReference>
<dbReference type="SUPFAM" id="SSF56796">
    <property type="entry name" value="Dehydroquinate synthase-like"/>
    <property type="match status" value="1"/>
</dbReference>